<keyword id="KW-1003">Cell membrane</keyword>
<keyword id="KW-0966">Cell projection</keyword>
<keyword id="KW-0963">Cytoplasm</keyword>
<keyword id="KW-0342">GTP-binding</keyword>
<keyword id="KW-0378">Hydrolase</keyword>
<keyword id="KW-1017">Isopeptide bond</keyword>
<keyword id="KW-0449">Lipoprotein</keyword>
<keyword id="KW-0472">Membrane</keyword>
<keyword id="KW-0488">Methylation</keyword>
<keyword id="KW-0547">Nucleotide-binding</keyword>
<keyword id="KW-0539">Nucleus</keyword>
<keyword id="KW-0597">Phosphoprotein</keyword>
<keyword id="KW-0636">Prenylation</keyword>
<keyword id="KW-1185">Reference proteome</keyword>
<keyword id="KW-0770">Synapse</keyword>
<keyword id="KW-0832">Ubl conjugation</keyword>
<dbReference type="EC" id="3.6.5.2" evidence="1"/>
<dbReference type="EMBL" id="X56390">
    <property type="protein sequence ID" value="CAA39801.1"/>
    <property type="molecule type" value="mRNA"/>
</dbReference>
<dbReference type="PIR" id="G36364">
    <property type="entry name" value="G36364"/>
</dbReference>
<dbReference type="RefSeq" id="NP_001003274.1">
    <property type="nucleotide sequence ID" value="NM_001003274.2"/>
</dbReference>
<dbReference type="BMRB" id="P62999"/>
<dbReference type="SMR" id="P62999"/>
<dbReference type="CORUM" id="P62999"/>
<dbReference type="DIP" id="DIP-40906N"/>
<dbReference type="FunCoup" id="P62999">
    <property type="interactions" value="2523"/>
</dbReference>
<dbReference type="IntAct" id="P62999">
    <property type="interactions" value="2"/>
</dbReference>
<dbReference type="MINT" id="P62999"/>
<dbReference type="STRING" id="9615.ENSCAFP00000032062"/>
<dbReference type="PaxDb" id="9612-ENSCAFP00000032062"/>
<dbReference type="Ensembl" id="ENSCAFT00030032776.1">
    <property type="protein sequence ID" value="ENSCAFP00030028596.1"/>
    <property type="gene ID" value="ENSCAFG00030017683.1"/>
</dbReference>
<dbReference type="Ensembl" id="ENSCAFT00040025732.1">
    <property type="protein sequence ID" value="ENSCAFP00040022379.1"/>
    <property type="gene ID" value="ENSCAFG00040013856.1"/>
</dbReference>
<dbReference type="Ensembl" id="ENSCAFT00845000802.1">
    <property type="protein sequence ID" value="ENSCAFP00845000597.1"/>
    <property type="gene ID" value="ENSCAFG00845000495.1"/>
</dbReference>
<dbReference type="GeneID" id="403955"/>
<dbReference type="KEGG" id="cfa:403955"/>
<dbReference type="CTD" id="5879"/>
<dbReference type="VEuPathDB" id="HostDB:ENSCAFG00845000495"/>
<dbReference type="eggNOG" id="KOG0393">
    <property type="taxonomic scope" value="Eukaryota"/>
</dbReference>
<dbReference type="GeneTree" id="ENSGT00940000153500"/>
<dbReference type="InParanoid" id="P62999"/>
<dbReference type="OrthoDB" id="8830751at2759"/>
<dbReference type="Reactome" id="R-CFA-114604">
    <property type="pathway name" value="GPVI-mediated activation cascade"/>
</dbReference>
<dbReference type="Reactome" id="R-CFA-1257604">
    <property type="pathway name" value="PIP3 activates AKT signaling"/>
</dbReference>
<dbReference type="Reactome" id="R-CFA-1433557">
    <property type="pathway name" value="Signaling by SCF-KIT"/>
</dbReference>
<dbReference type="Reactome" id="R-CFA-193648">
    <property type="pathway name" value="NRAGE signals death through JNK"/>
</dbReference>
<dbReference type="Reactome" id="R-CFA-2029482">
    <property type="pathway name" value="Regulation of actin dynamics for phagocytic cup formation"/>
</dbReference>
<dbReference type="Reactome" id="R-CFA-2424491">
    <property type="pathway name" value="DAP12 signaling"/>
</dbReference>
<dbReference type="Reactome" id="R-CFA-2871796">
    <property type="pathway name" value="FCERI mediated MAPK activation"/>
</dbReference>
<dbReference type="Reactome" id="R-CFA-389359">
    <property type="pathway name" value="CD28 dependent Vav1 pathway"/>
</dbReference>
<dbReference type="Reactome" id="R-CFA-3928662">
    <property type="pathway name" value="EPHB-mediated forward signaling"/>
</dbReference>
<dbReference type="Reactome" id="R-CFA-3928664">
    <property type="pathway name" value="Ephrin signaling"/>
</dbReference>
<dbReference type="Reactome" id="R-CFA-3928665">
    <property type="pathway name" value="EPH-ephrin mediated repulsion of cells"/>
</dbReference>
<dbReference type="Reactome" id="R-CFA-399954">
    <property type="pathway name" value="Sema3A PAK dependent Axon repulsion"/>
</dbReference>
<dbReference type="Reactome" id="R-CFA-4086400">
    <property type="pathway name" value="PCP/CE pathway"/>
</dbReference>
<dbReference type="Reactome" id="R-CFA-416550">
    <property type="pathway name" value="Sema4D mediated inhibition of cell attachment and migration"/>
</dbReference>
<dbReference type="Reactome" id="R-CFA-418885">
    <property type="pathway name" value="DCC mediated attractive signaling"/>
</dbReference>
<dbReference type="Reactome" id="R-CFA-4420097">
    <property type="pathway name" value="VEGFA-VEGFR2 Pathway"/>
</dbReference>
<dbReference type="Reactome" id="R-CFA-445144">
    <property type="pathway name" value="Signal transduction by L1"/>
</dbReference>
<dbReference type="Reactome" id="R-CFA-5218920">
    <property type="pathway name" value="VEGFR2 mediated vascular permeability"/>
</dbReference>
<dbReference type="Reactome" id="R-CFA-5625740">
    <property type="pathway name" value="RHO GTPases activate PKNs"/>
</dbReference>
<dbReference type="Reactome" id="R-CFA-5625900">
    <property type="pathway name" value="RHO GTPases activate CIT"/>
</dbReference>
<dbReference type="Reactome" id="R-CFA-5625970">
    <property type="pathway name" value="RHO GTPases activate KTN1"/>
</dbReference>
<dbReference type="Reactome" id="R-CFA-5626467">
    <property type="pathway name" value="RHO GTPases activate IQGAPs"/>
</dbReference>
<dbReference type="Reactome" id="R-CFA-5627123">
    <property type="pathway name" value="RHO GTPases activate PAKs"/>
</dbReference>
<dbReference type="Reactome" id="R-CFA-5663213">
    <property type="pathway name" value="RHO GTPases Activate WASPs and WAVEs"/>
</dbReference>
<dbReference type="Reactome" id="R-CFA-5663220">
    <property type="pathway name" value="RHO GTPases Activate Formins"/>
</dbReference>
<dbReference type="Reactome" id="R-CFA-5668599">
    <property type="pathway name" value="RHO GTPases Activate NADPH Oxidases"/>
</dbReference>
<dbReference type="Reactome" id="R-CFA-5687128">
    <property type="pathway name" value="MAPK6/MAPK4 signaling"/>
</dbReference>
<dbReference type="Reactome" id="R-CFA-6798695">
    <property type="pathway name" value="Neutrophil degranulation"/>
</dbReference>
<dbReference type="Reactome" id="R-CFA-6811558">
    <property type="pathway name" value="PI5P, PP2A and IER3 Regulate PI3K/AKT Signaling"/>
</dbReference>
<dbReference type="Reactome" id="R-CFA-8849471">
    <property type="pathway name" value="PTK6 Regulates RHO GTPases, RAS GTPase and MAP kinases"/>
</dbReference>
<dbReference type="Reactome" id="R-CFA-8875555">
    <property type="pathway name" value="MET activates RAP1 and RAC1"/>
</dbReference>
<dbReference type="Reactome" id="R-CFA-9013149">
    <property type="pathway name" value="RAC1 GTPase cycle"/>
</dbReference>
<dbReference type="Reactome" id="R-CFA-9032759">
    <property type="pathway name" value="NTRK2 activates RAC1"/>
</dbReference>
<dbReference type="Reactome" id="R-CFA-9748787">
    <property type="pathway name" value="Azathioprine ADME"/>
</dbReference>
<dbReference type="Reactome" id="R-CFA-983231">
    <property type="pathway name" value="Factors involved in megakaryocyte development and platelet production"/>
</dbReference>
<dbReference type="Proteomes" id="UP000002254">
    <property type="component" value="Unplaced"/>
</dbReference>
<dbReference type="Proteomes" id="UP000694429">
    <property type="component" value="Chromosome 6"/>
</dbReference>
<dbReference type="Proteomes" id="UP000694542">
    <property type="component" value="Chromosome 6"/>
</dbReference>
<dbReference type="Proteomes" id="UP000805418">
    <property type="component" value="Chromosome 4"/>
</dbReference>
<dbReference type="GO" id="GO:0042995">
    <property type="term" value="C:cell projection"/>
    <property type="evidence" value="ECO:0000318"/>
    <property type="project" value="GO_Central"/>
</dbReference>
<dbReference type="GO" id="GO:0031410">
    <property type="term" value="C:cytoplasmic vesicle"/>
    <property type="evidence" value="ECO:0000318"/>
    <property type="project" value="GO_Central"/>
</dbReference>
<dbReference type="GO" id="GO:0005856">
    <property type="term" value="C:cytoskeleton"/>
    <property type="evidence" value="ECO:0000318"/>
    <property type="project" value="GO_Central"/>
</dbReference>
<dbReference type="GO" id="GO:0005829">
    <property type="term" value="C:cytosol"/>
    <property type="evidence" value="ECO:0000250"/>
    <property type="project" value="UniProtKB"/>
</dbReference>
<dbReference type="GO" id="GO:0030425">
    <property type="term" value="C:dendrite"/>
    <property type="evidence" value="ECO:0007669"/>
    <property type="project" value="UniProtKB-SubCell"/>
</dbReference>
<dbReference type="GO" id="GO:0030027">
    <property type="term" value="C:lamellipodium"/>
    <property type="evidence" value="ECO:0000250"/>
    <property type="project" value="UniProtKB"/>
</dbReference>
<dbReference type="GO" id="GO:0042470">
    <property type="term" value="C:melanosome"/>
    <property type="evidence" value="ECO:0007669"/>
    <property type="project" value="UniProtKB-SubCell"/>
</dbReference>
<dbReference type="GO" id="GO:0016020">
    <property type="term" value="C:membrane"/>
    <property type="evidence" value="ECO:0000250"/>
    <property type="project" value="UniProtKB"/>
</dbReference>
<dbReference type="GO" id="GO:0005634">
    <property type="term" value="C:nucleus"/>
    <property type="evidence" value="ECO:0000250"/>
    <property type="project" value="UniProtKB"/>
</dbReference>
<dbReference type="GO" id="GO:0005886">
    <property type="term" value="C:plasma membrane"/>
    <property type="evidence" value="ECO:0000318"/>
    <property type="project" value="GO_Central"/>
</dbReference>
<dbReference type="GO" id="GO:0045202">
    <property type="term" value="C:synapse"/>
    <property type="evidence" value="ECO:0007669"/>
    <property type="project" value="UniProtKB-SubCell"/>
</dbReference>
<dbReference type="GO" id="GO:0003925">
    <property type="term" value="F:G protein activity"/>
    <property type="evidence" value="ECO:0007669"/>
    <property type="project" value="UniProtKB-EC"/>
</dbReference>
<dbReference type="GO" id="GO:0005525">
    <property type="term" value="F:GTP binding"/>
    <property type="evidence" value="ECO:0000250"/>
    <property type="project" value="UniProtKB"/>
</dbReference>
<dbReference type="GO" id="GO:0003924">
    <property type="term" value="F:GTPase activity"/>
    <property type="evidence" value="ECO:0000318"/>
    <property type="project" value="GO_Central"/>
</dbReference>
<dbReference type="GO" id="GO:0019901">
    <property type="term" value="F:protein kinase binding"/>
    <property type="evidence" value="ECO:0000318"/>
    <property type="project" value="GO_Central"/>
</dbReference>
<dbReference type="GO" id="GO:0051022">
    <property type="term" value="F:Rho GDP-dissociation inhibitor binding"/>
    <property type="evidence" value="ECO:0000250"/>
    <property type="project" value="UniProtKB"/>
</dbReference>
<dbReference type="GO" id="GO:0007015">
    <property type="term" value="P:actin filament organization"/>
    <property type="evidence" value="ECO:0000250"/>
    <property type="project" value="UniProtKB"/>
</dbReference>
<dbReference type="GO" id="GO:0060326">
    <property type="term" value="P:cell chemotaxis"/>
    <property type="evidence" value="ECO:0000318"/>
    <property type="project" value="GO_Central"/>
</dbReference>
<dbReference type="GO" id="GO:0048870">
    <property type="term" value="P:cell motility"/>
    <property type="evidence" value="ECO:0000250"/>
    <property type="project" value="UniProtKB"/>
</dbReference>
<dbReference type="GO" id="GO:0030031">
    <property type="term" value="P:cell projection assembly"/>
    <property type="evidence" value="ECO:0000318"/>
    <property type="project" value="GO_Central"/>
</dbReference>
<dbReference type="GO" id="GO:0030865">
    <property type="term" value="P:cortical cytoskeleton organization"/>
    <property type="evidence" value="ECO:0000318"/>
    <property type="project" value="GO_Central"/>
</dbReference>
<dbReference type="GO" id="GO:0007163">
    <property type="term" value="P:establishment or maintenance of cell polarity"/>
    <property type="evidence" value="ECO:0000318"/>
    <property type="project" value="GO_Central"/>
</dbReference>
<dbReference type="GO" id="GO:0008045">
    <property type="term" value="P:motor neuron axon guidance"/>
    <property type="evidence" value="ECO:0000318"/>
    <property type="project" value="GO_Central"/>
</dbReference>
<dbReference type="GO" id="GO:0001764">
    <property type="term" value="P:neuron migration"/>
    <property type="evidence" value="ECO:0000250"/>
    <property type="project" value="UniProtKB"/>
</dbReference>
<dbReference type="GO" id="GO:1903348">
    <property type="term" value="P:positive regulation of bicellular tight junction assembly"/>
    <property type="evidence" value="ECO:0000250"/>
    <property type="project" value="UniProtKB"/>
</dbReference>
<dbReference type="GO" id="GO:0001934">
    <property type="term" value="P:positive regulation of protein phosphorylation"/>
    <property type="evidence" value="ECO:0000250"/>
    <property type="project" value="UniProtKB"/>
</dbReference>
<dbReference type="GO" id="GO:0016601">
    <property type="term" value="P:Rac protein signal transduction"/>
    <property type="evidence" value="ECO:0000318"/>
    <property type="project" value="GO_Central"/>
</dbReference>
<dbReference type="GO" id="GO:0032956">
    <property type="term" value="P:regulation of actin cytoskeleton organization"/>
    <property type="evidence" value="ECO:0000318"/>
    <property type="project" value="GO_Central"/>
</dbReference>
<dbReference type="GO" id="GO:0030334">
    <property type="term" value="P:regulation of cell migration"/>
    <property type="evidence" value="ECO:0000250"/>
    <property type="project" value="UniProtKB"/>
</dbReference>
<dbReference type="GO" id="GO:0008360">
    <property type="term" value="P:regulation of cell shape"/>
    <property type="evidence" value="ECO:0000318"/>
    <property type="project" value="GO_Central"/>
</dbReference>
<dbReference type="GO" id="GO:1902622">
    <property type="term" value="P:regulation of neutrophil migration"/>
    <property type="evidence" value="ECO:0000318"/>
    <property type="project" value="GO_Central"/>
</dbReference>
<dbReference type="GO" id="GO:0071526">
    <property type="term" value="P:semaphorin-plexin signaling pathway"/>
    <property type="evidence" value="ECO:0000250"/>
    <property type="project" value="UniProtKB"/>
</dbReference>
<dbReference type="CDD" id="cd01871">
    <property type="entry name" value="Rac1_like"/>
    <property type="match status" value="1"/>
</dbReference>
<dbReference type="FunFam" id="3.40.50.300:FF:000088">
    <property type="entry name" value="Ras-related C3 botulinum toxin substrate 1"/>
    <property type="match status" value="1"/>
</dbReference>
<dbReference type="Gene3D" id="3.40.50.300">
    <property type="entry name" value="P-loop containing nucleotide triphosphate hydrolases"/>
    <property type="match status" value="1"/>
</dbReference>
<dbReference type="InterPro" id="IPR027417">
    <property type="entry name" value="P-loop_NTPase"/>
</dbReference>
<dbReference type="InterPro" id="IPR005225">
    <property type="entry name" value="Small_GTP-bd"/>
</dbReference>
<dbReference type="InterPro" id="IPR001806">
    <property type="entry name" value="Small_GTPase"/>
</dbReference>
<dbReference type="InterPro" id="IPR003578">
    <property type="entry name" value="Small_GTPase_Rho"/>
</dbReference>
<dbReference type="NCBIfam" id="TIGR00231">
    <property type="entry name" value="small_GTP"/>
    <property type="match status" value="1"/>
</dbReference>
<dbReference type="PANTHER" id="PTHR24072">
    <property type="entry name" value="RHO FAMILY GTPASE"/>
    <property type="match status" value="1"/>
</dbReference>
<dbReference type="Pfam" id="PF00071">
    <property type="entry name" value="Ras"/>
    <property type="match status" value="1"/>
</dbReference>
<dbReference type="PRINTS" id="PR00449">
    <property type="entry name" value="RASTRNSFRMNG"/>
</dbReference>
<dbReference type="SMART" id="SM00175">
    <property type="entry name" value="RAB"/>
    <property type="match status" value="1"/>
</dbReference>
<dbReference type="SMART" id="SM00173">
    <property type="entry name" value="RAS"/>
    <property type="match status" value="1"/>
</dbReference>
<dbReference type="SMART" id="SM00174">
    <property type="entry name" value="RHO"/>
    <property type="match status" value="1"/>
</dbReference>
<dbReference type="SUPFAM" id="SSF52540">
    <property type="entry name" value="P-loop containing nucleoside triphosphate hydrolases"/>
    <property type="match status" value="1"/>
</dbReference>
<dbReference type="PROSITE" id="PS51420">
    <property type="entry name" value="RHO"/>
    <property type="match status" value="1"/>
</dbReference>
<name>RAC1_CANLF</name>
<gene>
    <name evidence="1" type="primary">RAC1</name>
</gene>
<evidence type="ECO:0000250" key="1">
    <source>
        <dbReference type="UniProtKB" id="P63000"/>
    </source>
</evidence>
<evidence type="ECO:0000250" key="2">
    <source>
        <dbReference type="UniProtKB" id="P63001"/>
    </source>
</evidence>
<evidence type="ECO:0000250" key="3">
    <source>
        <dbReference type="UniProtKB" id="Q6RUV5"/>
    </source>
</evidence>
<evidence type="ECO:0000255" key="4"/>
<evidence type="ECO:0000305" key="5"/>
<feature type="chain" id="PRO_0000042034" description="Ras-related C3 botulinum toxin substrate 1">
    <location>
        <begin position="1"/>
        <end position="189"/>
    </location>
</feature>
<feature type="propeptide" id="PRO_0000042035" description="Removed in mature form" evidence="1">
    <location>
        <begin position="190"/>
        <end position="192"/>
    </location>
</feature>
<feature type="short sequence motif" description="Effector region" evidence="4">
    <location>
        <begin position="32"/>
        <end position="40"/>
    </location>
</feature>
<feature type="short sequence motif" description="Polybasic region; required for nuclear import" evidence="1">
    <location>
        <begin position="179"/>
        <end position="188"/>
    </location>
</feature>
<feature type="binding site" evidence="1">
    <location>
        <position position="12"/>
    </location>
    <ligand>
        <name>GTP</name>
        <dbReference type="ChEBI" id="CHEBI:37565"/>
    </ligand>
</feature>
<feature type="binding site" evidence="1">
    <location>
        <position position="13"/>
    </location>
    <ligand>
        <name>GTP</name>
        <dbReference type="ChEBI" id="CHEBI:37565"/>
    </ligand>
</feature>
<feature type="binding site" evidence="1">
    <location>
        <position position="14"/>
    </location>
    <ligand>
        <name>GTP</name>
        <dbReference type="ChEBI" id="CHEBI:37565"/>
    </ligand>
</feature>
<feature type="binding site" evidence="1">
    <location>
        <position position="15"/>
    </location>
    <ligand>
        <name>GTP</name>
        <dbReference type="ChEBI" id="CHEBI:37565"/>
    </ligand>
</feature>
<feature type="binding site" evidence="1">
    <location>
        <position position="16"/>
    </location>
    <ligand>
        <name>GTP</name>
        <dbReference type="ChEBI" id="CHEBI:37565"/>
    </ligand>
</feature>
<feature type="binding site" evidence="1">
    <location>
        <position position="17"/>
    </location>
    <ligand>
        <name>GTP</name>
        <dbReference type="ChEBI" id="CHEBI:37565"/>
    </ligand>
</feature>
<feature type="binding site" evidence="1">
    <location>
        <position position="18"/>
    </location>
    <ligand>
        <name>GTP</name>
        <dbReference type="ChEBI" id="CHEBI:37565"/>
    </ligand>
</feature>
<feature type="binding site" evidence="1">
    <location>
        <position position="31"/>
    </location>
    <ligand>
        <name>GTP</name>
        <dbReference type="ChEBI" id="CHEBI:37565"/>
    </ligand>
</feature>
<feature type="binding site" evidence="1">
    <location>
        <position position="32"/>
    </location>
    <ligand>
        <name>GTP</name>
        <dbReference type="ChEBI" id="CHEBI:37565"/>
    </ligand>
</feature>
<feature type="binding site" evidence="1">
    <location>
        <position position="34"/>
    </location>
    <ligand>
        <name>GTP</name>
        <dbReference type="ChEBI" id="CHEBI:37565"/>
    </ligand>
</feature>
<feature type="binding site" evidence="1">
    <location>
        <position position="35"/>
    </location>
    <ligand>
        <name>GTP</name>
        <dbReference type="ChEBI" id="CHEBI:37565"/>
    </ligand>
</feature>
<feature type="binding site" evidence="1">
    <location>
        <position position="59"/>
    </location>
    <ligand>
        <name>GTP</name>
        <dbReference type="ChEBI" id="CHEBI:37565"/>
    </ligand>
</feature>
<feature type="binding site" evidence="1">
    <location>
        <position position="60"/>
    </location>
    <ligand>
        <name>GTP</name>
        <dbReference type="ChEBI" id="CHEBI:37565"/>
    </ligand>
</feature>
<feature type="binding site" evidence="1">
    <location>
        <position position="116"/>
    </location>
    <ligand>
        <name>GTP</name>
        <dbReference type="ChEBI" id="CHEBI:37565"/>
    </ligand>
</feature>
<feature type="binding site" evidence="1">
    <location>
        <position position="118"/>
    </location>
    <ligand>
        <name>GTP</name>
        <dbReference type="ChEBI" id="CHEBI:37565"/>
    </ligand>
</feature>
<feature type="binding site" evidence="1">
    <location>
        <position position="119"/>
    </location>
    <ligand>
        <name>GTP</name>
        <dbReference type="ChEBI" id="CHEBI:37565"/>
    </ligand>
</feature>
<feature type="binding site" evidence="1">
    <location>
        <position position="159"/>
    </location>
    <ligand>
        <name>GTP</name>
        <dbReference type="ChEBI" id="CHEBI:37565"/>
    </ligand>
</feature>
<feature type="binding site" evidence="1">
    <location>
        <position position="160"/>
    </location>
    <ligand>
        <name>GTP</name>
        <dbReference type="ChEBI" id="CHEBI:37565"/>
    </ligand>
</feature>
<feature type="modified residue" description="Phosphoserine" evidence="1">
    <location>
        <position position="71"/>
    </location>
</feature>
<feature type="modified residue" description="Cysteine methyl ester" evidence="1">
    <location>
        <position position="189"/>
    </location>
</feature>
<feature type="lipid moiety-binding region" description="S-geranylgeranyl cysteine" evidence="1">
    <location>
        <position position="189"/>
    </location>
</feature>
<feature type="cross-link" description="Glycyl lysine isopeptide (Lys-Gly) (interchain with G-Cter in ubiquitin)" evidence="1">
    <location>
        <position position="147"/>
    </location>
</feature>
<feature type="cross-link" description="Glycyl lysine isopeptide (Lys-Gly) (interchain with G-Cter in ubiquitin)" evidence="1">
    <location>
        <position position="166"/>
    </location>
</feature>
<organism>
    <name type="scientific">Canis lupus familiaris</name>
    <name type="common">Dog</name>
    <name type="synonym">Canis familiaris</name>
    <dbReference type="NCBI Taxonomy" id="9615"/>
    <lineage>
        <taxon>Eukaryota</taxon>
        <taxon>Metazoa</taxon>
        <taxon>Chordata</taxon>
        <taxon>Craniata</taxon>
        <taxon>Vertebrata</taxon>
        <taxon>Euteleostomi</taxon>
        <taxon>Mammalia</taxon>
        <taxon>Eutheria</taxon>
        <taxon>Laurasiatheria</taxon>
        <taxon>Carnivora</taxon>
        <taxon>Caniformia</taxon>
        <taxon>Canidae</taxon>
        <taxon>Canis</taxon>
    </lineage>
</organism>
<reference key="1">
    <citation type="journal article" date="1990" name="Mol. Cell. Biol.">
        <title>Molecular cloning of YPT1/SEC4-related cDNAs from an epithelial cell line.</title>
        <authorList>
            <person name="Chavrier P."/>
            <person name="Vingron M."/>
            <person name="Sander C."/>
            <person name="Simons K."/>
            <person name="Zerial M."/>
        </authorList>
    </citation>
    <scope>NUCLEOTIDE SEQUENCE [MRNA]</scope>
    <source>
        <strain>Cocker spaniel</strain>
        <tissue>Kidney</tissue>
    </source>
</reference>
<proteinExistence type="evidence at transcript level"/>
<sequence>MQAIKCVVVGDGAVGKTCLLISYTTNAFPGEYIPTVFDNYSANVMVDGKPVNLGLWDTAGQEDYDRLRPLSYPQTDVFLICFSLVSPASFENVRAKWYPEVRHHCPNTPIILVGTKLDLRDDKDTIEKLKEKKLTPITYPQGLAMAKEIGAVKYLECSALTQRGLKTVFDEAIRAVLCPPPVKKRKRKCLLL</sequence>
<comment type="function">
    <text evidence="1 2 3">Plasma membrane-associated small GTPase which cycles between active GTP-bound and inactive GDP-bound states. In its active state, binds to a variety of effector proteins to regulate cellular responses such as secretory processes, phagocytosis of apoptotic cells, epithelial cell polarization, neurons adhesion, migration and differentiation, and growth-factor induced formation of membrane ruffles. Rac1 p21/rho GDI heterodimer is the active component of the cytosolic factor sigma 1, which is involved in stimulation of the NADPH oxidase activity in macrophages. Essential for the SPATA13-mediated regulation of cell migration and adhesion assembly and disassembly. Stimulates PKN2 kinase activity. In concert with RAB7A, plays a role in regulating the formation of RBs (ruffled borders) in osteoclasts. In podocytes, promotes nuclear shuttling of NR3C2; this modulation is required for a proper kidney functioning. Required for atypical chemokine receptor ACKR2-induced LIMK1-PAK1-dependent phosphorylation of cofilin (CFL1) and for up-regulation of ACKR2 from endosomal compartment to cell membrane, increasing its efficiency in chemokine uptake and degradation (By similarity). In neurons, is involved in dendritic spine formation and synaptic plasticity (By similarity). In hippocampal neurons, involved in spine morphogenesis and synapse formation, through local activation at synapses by guanine nucleotide exchange factors (GEFs), such as ARHGEF6/ARHGEF7/PIX (By similarity). In synapses, seems to mediate the regulation of F-actin cluster formation performed by SHANK3 (By similarity). In neurons, plays a crucial role in regulating GABA(A) receptor synaptic stability and hence GABAergic inhibitory synaptic transmission through its role in PAK1 activation and eventually F-actin stabilization (By similarity). Required for DSG3 translocation to cell-cell junctions, DSG3-mediated organization of cortical F-actin bundles and anchoring of actin at cell junctions; via interaction with DSG3 (By similarity). Subunit of the phagocyte NADPH oxidase complex that mediates the transfer of electrons from cytosolic NADPH to O2 to produce the superoxide anion (O2(-)) (By similarity).</text>
</comment>
<comment type="catalytic activity">
    <reaction evidence="1">
        <text>GTP + H2O = GDP + phosphate + H(+)</text>
        <dbReference type="Rhea" id="RHEA:19669"/>
        <dbReference type="ChEBI" id="CHEBI:15377"/>
        <dbReference type="ChEBI" id="CHEBI:15378"/>
        <dbReference type="ChEBI" id="CHEBI:37565"/>
        <dbReference type="ChEBI" id="CHEBI:43474"/>
        <dbReference type="ChEBI" id="CHEBI:58189"/>
        <dbReference type="EC" id="3.6.5.2"/>
    </reaction>
    <physiologicalReaction direction="left-to-right" evidence="1">
        <dbReference type="Rhea" id="RHEA:19670"/>
    </physiologicalReaction>
</comment>
<comment type="activity regulation">
    <text evidence="1">Regulated by guanine nucleotide exchange factors (GEFs) which promote the exchange of bound GDP for free GTP, GTPase activating proteins (GAPs) which increase the GTP hydrolysis activity, and GDP dissociation inhibitors which inhibit the dissociation of the nucleotide from the GTPase. GTP hydrolysis is stimulated by ARHGAP30.</text>
</comment>
<comment type="subunit">
    <text evidence="1 2 3">Interacts with NISCH. Interacts with PIP5K1A. Interacts with the GTP-bound form of RAB7A. Interacts with SRGAP2. Interacts with CYFIP1/SRA-1. Interacts with PLXNB3. Interacts with ARHGDIA; the interaction is induced by SEMA5A, mediated through PLXNB3 and inactivates and stabilizes RAC1. Interacts (GTP-bound form preferentially) with PKN2 (via the REM repeats); the interaction stimulates autophosphorylation and phosphorylation of PKN2. Interacts with the GEF proteins PREX1, RASGRF2, FARP1, FARP2, DOCK1, DOCK2 and DOCK7, which promote the exchange between GDP and GTP, and therefore activate it. Interacts with PARD6A, PARD6B and PARD6G in a GTP-dependent manner. Part of a quaternary complex containing PARD3, some PARD6 protein (PARD6A, PARD6B or PARD6G) and some atypical PKC protein (PRKCI or PRKCZ), which plays a central role in epithelial cell polarization. Found in a trimeric complex composed of DOCK1 and ELMO1, which plays a central role in phagocytosis of apoptotic cells. Interacts with RALBP1 via its effector domain. Interacts with PLXNB1. Part of a complex with MAP2K3, MAP3K3, CCM2 and DEF6. Interacts with BAIAP2, BAIAP2L1 and DEF6. Interacts with Y.pseudotuberculosis YPKA and PLCB2. Interacts with NOXA1. Interacts with ARHGEF2. Interacts with TBC1D2. Interacts with UNKL. Interacts with USP6. Interacts with SPATA13. Interacts with ARHGEF16; mediates activation of RAC1 by EPHA2. Interacts with ITGB4. Interacts with S100A8 and calprotectin (S100A8/9). Interacts with PACSIN2. Interacts with ITGB1BP1. Interacts (when active) with PPP5C (via TPR repeats); activates PPP5C phosphatase activity and translocates PPP5C to the cell membrane. Interacts with RAPH1 (via Ras associating and PH domains). Interacts with MTSS2 (via IMD domain); this interaction may be important to potentiate PDGF-induced RAC1 activation. Interacts with PAK2. Interacts (GTP-bound form) with SH3RF1 and SH3RF3. Found in a complex with SH3RF1, MAPK8IP1/JIP1, MAP3K11/MLK3, MAP2K7/MKK7 and MAPK8/JNK1. Interacts (both active GTP- or inactive GDP-bound forms) with SH3RF2. Interacts (GTP-bound form preferentially) with CYRIB (By similarity). Interacts with DOCK4 (via DOCKER domain); functions as a guanine nucleotide exchange factor (GEF) for RAC1 (By similarity). Interacts with GARRE1 (By similarity). Interacts with RAP1GDS1 (By similarity). Interacts with TNFAIP8L2 (By similarity). May interact with ARHGAP36 (By similarity). Interacts with CD151 and ITGB1 (By similarity). Interacts with DSG3; the interaction is required for DSG3 translocation to cell-cell junctions, organization of cortical F-actin bundles and actin anchoring at cell-cell junctions (By similarity). Component of the phagocyte NADPH oxidase complex composed of an obligatory core heterodimer formed by the membrane proteins CYBA and CYBB and the cytosolic regulatory subunits NCF1/p47-phox, NCF2/p67-phox, NCF4/p40-phox and the small GTPase RAC1 or RAC2. Interacts with NCF2 (By similarity).</text>
</comment>
<comment type="subcellular location">
    <subcellularLocation>
        <location evidence="1">Cell membrane</location>
        <topology evidence="1">Lipid-anchor</topology>
        <orientation evidence="1">Cytoplasmic side</orientation>
    </subcellularLocation>
    <subcellularLocation>
        <location evidence="1">Melanosome</location>
    </subcellularLocation>
    <subcellularLocation>
        <location evidence="1">Cytoplasm</location>
    </subcellularLocation>
    <subcellularLocation>
        <location evidence="2">Cell projection</location>
        <location evidence="2">Lamellipodium</location>
    </subcellularLocation>
    <subcellularLocation>
        <location evidence="2">Cell projection</location>
        <location evidence="2">Dendrite</location>
    </subcellularLocation>
    <subcellularLocation>
        <location evidence="3">Synapse</location>
    </subcellularLocation>
    <subcellularLocation>
        <location evidence="1">Nucleus</location>
    </subcellularLocation>
    <text evidence="1 2 3">Inner surface of plasma membrane possibly with attachment requiring prenylation of the C-terminal cysteine (By similarity). Found in the ruffled border (a late endosomal-like compartment in the plasma membrane) of bone-resorbing osteoclasts. Localizes to the lamellipodium in a SH3RF1-dependent manner (By similarity). In macrophages, cytoplasmic location increases upon CSF1 stimulation (By similarity). Activation by GTP-binding promotes nuclear localization (By similarity).</text>
</comment>
<comment type="domain">
    <text evidence="1">The effector region mediates interaction with DEF6.</text>
</comment>
<comment type="PTM">
    <text evidence="1">GTP-bound active form is ubiquitinated at Lys-147 by HACE1, leading to its degradation by the proteasome.</text>
</comment>
<comment type="PTM">
    <text evidence="1">Phosphorylated by AKT at Ser-71.</text>
</comment>
<comment type="PTM">
    <text evidence="1">Ubiquitinated at Lys-166 in a FBXL19-mediated manner; leading to proteasomal degradation.</text>
</comment>
<comment type="similarity">
    <text evidence="5">Belongs to the small GTPase superfamily. Rho family.</text>
</comment>
<accession>P62999</accession>
<accession>O95501</accession>
<accession>P15154</accession>
<accession>Q9BTB4</accession>
<protein>
    <recommendedName>
        <fullName evidence="1">Ras-related C3 botulinum toxin substrate 1</fullName>
        <ecNumber evidence="1">3.6.5.2</ecNumber>
    </recommendedName>
    <alternativeName>
        <fullName>Rac2</fullName>
    </alternativeName>
    <alternativeName>
        <fullName>p21-Rac1</fullName>
    </alternativeName>
</protein>